<name>KCY_MYCPA</name>
<evidence type="ECO:0000255" key="1">
    <source>
        <dbReference type="HAMAP-Rule" id="MF_00238"/>
    </source>
</evidence>
<gene>
    <name evidence="1" type="primary">cmk</name>
    <name type="ordered locus">MAP_1414</name>
</gene>
<reference key="1">
    <citation type="journal article" date="2005" name="Proc. Natl. Acad. Sci. U.S.A.">
        <title>The complete genome sequence of Mycobacterium avium subspecies paratuberculosis.</title>
        <authorList>
            <person name="Li L."/>
            <person name="Bannantine J.P."/>
            <person name="Zhang Q."/>
            <person name="Amonsin A."/>
            <person name="May B.J."/>
            <person name="Alt D."/>
            <person name="Banerji N."/>
            <person name="Kanjilal S."/>
            <person name="Kapur V."/>
        </authorList>
    </citation>
    <scope>NUCLEOTIDE SEQUENCE [LARGE SCALE GENOMIC DNA]</scope>
    <source>
        <strain>ATCC BAA-968 / K-10</strain>
    </source>
</reference>
<keyword id="KW-0067">ATP-binding</keyword>
<keyword id="KW-0963">Cytoplasm</keyword>
<keyword id="KW-0418">Kinase</keyword>
<keyword id="KW-0547">Nucleotide-binding</keyword>
<keyword id="KW-1185">Reference proteome</keyword>
<keyword id="KW-0808">Transferase</keyword>
<accession>Q740D7</accession>
<organism>
    <name type="scientific">Mycolicibacterium paratuberculosis (strain ATCC BAA-968 / K-10)</name>
    <name type="common">Mycobacterium paratuberculosis</name>
    <dbReference type="NCBI Taxonomy" id="262316"/>
    <lineage>
        <taxon>Bacteria</taxon>
        <taxon>Bacillati</taxon>
        <taxon>Actinomycetota</taxon>
        <taxon>Actinomycetes</taxon>
        <taxon>Mycobacteriales</taxon>
        <taxon>Mycobacteriaceae</taxon>
        <taxon>Mycobacterium</taxon>
        <taxon>Mycobacterium avium complex (MAC)</taxon>
    </lineage>
</organism>
<proteinExistence type="inferred from homology"/>
<comment type="catalytic activity">
    <reaction evidence="1">
        <text>CMP + ATP = CDP + ADP</text>
        <dbReference type="Rhea" id="RHEA:11600"/>
        <dbReference type="ChEBI" id="CHEBI:30616"/>
        <dbReference type="ChEBI" id="CHEBI:58069"/>
        <dbReference type="ChEBI" id="CHEBI:60377"/>
        <dbReference type="ChEBI" id="CHEBI:456216"/>
        <dbReference type="EC" id="2.7.4.25"/>
    </reaction>
</comment>
<comment type="catalytic activity">
    <reaction evidence="1">
        <text>dCMP + ATP = dCDP + ADP</text>
        <dbReference type="Rhea" id="RHEA:25094"/>
        <dbReference type="ChEBI" id="CHEBI:30616"/>
        <dbReference type="ChEBI" id="CHEBI:57566"/>
        <dbReference type="ChEBI" id="CHEBI:58593"/>
        <dbReference type="ChEBI" id="CHEBI:456216"/>
        <dbReference type="EC" id="2.7.4.25"/>
    </reaction>
</comment>
<comment type="subcellular location">
    <subcellularLocation>
        <location evidence="1">Cytoplasm</location>
    </subcellularLocation>
</comment>
<comment type="similarity">
    <text evidence="1">Belongs to the cytidylate kinase family. Type 1 subfamily.</text>
</comment>
<feature type="chain" id="PRO_0000131940" description="Cytidylate kinase">
    <location>
        <begin position="1"/>
        <end position="228"/>
    </location>
</feature>
<feature type="binding site" evidence="1">
    <location>
        <begin position="11"/>
        <end position="19"/>
    </location>
    <ligand>
        <name>ATP</name>
        <dbReference type="ChEBI" id="CHEBI:30616"/>
    </ligand>
</feature>
<sequence>MSSDVVVAIDGPAGTGKSSVSKGLARALGARYLDTGGMYRMVTLAVLRAGIDPADAEAVGRAAQAVRMSVDYHPDGDRYFLGGEDVSTEIRGDKVTAAVSAVSSVPAVRTRLVGLQREMASGPGSIVVEGRDIGTVVLPDAPVKIFLTASAETRARRRNDQNVAAGLADDYEAVLADVRRRDHLDSTRRVSPLRAAPDAVVVDTSDMTEAQVIDHLRDLVRQRSEVAR</sequence>
<dbReference type="EC" id="2.7.4.25" evidence="1"/>
<dbReference type="EMBL" id="AE016958">
    <property type="protein sequence ID" value="AAS03731.1"/>
    <property type="molecule type" value="Genomic_DNA"/>
</dbReference>
<dbReference type="RefSeq" id="WP_003876328.1">
    <property type="nucleotide sequence ID" value="NZ_CP106873.1"/>
</dbReference>
<dbReference type="SMR" id="Q740D7"/>
<dbReference type="STRING" id="262316.MAP_1414"/>
<dbReference type="KEGG" id="mpa:MAP_1414"/>
<dbReference type="eggNOG" id="COG0283">
    <property type="taxonomic scope" value="Bacteria"/>
</dbReference>
<dbReference type="HOGENOM" id="CLU_079959_0_0_11"/>
<dbReference type="Proteomes" id="UP000000580">
    <property type="component" value="Chromosome"/>
</dbReference>
<dbReference type="GO" id="GO:0005829">
    <property type="term" value="C:cytosol"/>
    <property type="evidence" value="ECO:0007669"/>
    <property type="project" value="TreeGrafter"/>
</dbReference>
<dbReference type="GO" id="GO:0005524">
    <property type="term" value="F:ATP binding"/>
    <property type="evidence" value="ECO:0007669"/>
    <property type="project" value="UniProtKB-UniRule"/>
</dbReference>
<dbReference type="GO" id="GO:0036430">
    <property type="term" value="F:CMP kinase activity"/>
    <property type="evidence" value="ECO:0007669"/>
    <property type="project" value="RHEA"/>
</dbReference>
<dbReference type="GO" id="GO:0036431">
    <property type="term" value="F:dCMP kinase activity"/>
    <property type="evidence" value="ECO:0007669"/>
    <property type="project" value="RHEA"/>
</dbReference>
<dbReference type="GO" id="GO:0015949">
    <property type="term" value="P:nucleobase-containing small molecule interconversion"/>
    <property type="evidence" value="ECO:0007669"/>
    <property type="project" value="TreeGrafter"/>
</dbReference>
<dbReference type="GO" id="GO:0006220">
    <property type="term" value="P:pyrimidine nucleotide metabolic process"/>
    <property type="evidence" value="ECO:0007669"/>
    <property type="project" value="UniProtKB-UniRule"/>
</dbReference>
<dbReference type="CDD" id="cd02020">
    <property type="entry name" value="CMPK"/>
    <property type="match status" value="1"/>
</dbReference>
<dbReference type="Gene3D" id="3.40.50.300">
    <property type="entry name" value="P-loop containing nucleotide triphosphate hydrolases"/>
    <property type="match status" value="1"/>
</dbReference>
<dbReference type="HAMAP" id="MF_00238">
    <property type="entry name" value="Cytidyl_kinase_type1"/>
    <property type="match status" value="1"/>
</dbReference>
<dbReference type="InterPro" id="IPR003136">
    <property type="entry name" value="Cytidylate_kin"/>
</dbReference>
<dbReference type="InterPro" id="IPR011994">
    <property type="entry name" value="Cytidylate_kinase_dom"/>
</dbReference>
<dbReference type="InterPro" id="IPR027417">
    <property type="entry name" value="P-loop_NTPase"/>
</dbReference>
<dbReference type="NCBIfam" id="TIGR00017">
    <property type="entry name" value="cmk"/>
    <property type="match status" value="1"/>
</dbReference>
<dbReference type="PANTHER" id="PTHR21299:SF2">
    <property type="entry name" value="CYTIDYLATE KINASE"/>
    <property type="match status" value="1"/>
</dbReference>
<dbReference type="PANTHER" id="PTHR21299">
    <property type="entry name" value="CYTIDYLATE KINASE/PANTOATE-BETA-ALANINE LIGASE"/>
    <property type="match status" value="1"/>
</dbReference>
<dbReference type="Pfam" id="PF02224">
    <property type="entry name" value="Cytidylate_kin"/>
    <property type="match status" value="1"/>
</dbReference>
<dbReference type="SUPFAM" id="SSF52540">
    <property type="entry name" value="P-loop containing nucleoside triphosphate hydrolases"/>
    <property type="match status" value="1"/>
</dbReference>
<protein>
    <recommendedName>
        <fullName evidence="1">Cytidylate kinase</fullName>
        <shortName evidence="1">CK</shortName>
        <ecNumber evidence="1">2.7.4.25</ecNumber>
    </recommendedName>
    <alternativeName>
        <fullName evidence="1">Cytidine monophosphate kinase</fullName>
        <shortName evidence="1">CMP kinase</shortName>
    </alternativeName>
</protein>